<proteinExistence type="inferred from homology"/>
<dbReference type="EC" id="1.4.4.2" evidence="1"/>
<dbReference type="EMBL" id="CP000127">
    <property type="protein sequence ID" value="ABA59000.1"/>
    <property type="molecule type" value="Genomic_DNA"/>
</dbReference>
<dbReference type="RefSeq" id="WP_004269153.1">
    <property type="nucleotide sequence ID" value="NC_007484.1"/>
</dbReference>
<dbReference type="SMR" id="Q3J846"/>
<dbReference type="STRING" id="323261.Noc_2547"/>
<dbReference type="KEGG" id="noc:Noc_2547"/>
<dbReference type="eggNOG" id="COG1003">
    <property type="taxonomic scope" value="Bacteria"/>
</dbReference>
<dbReference type="HOGENOM" id="CLU_004620_5_0_6"/>
<dbReference type="InParanoid" id="Q3J846"/>
<dbReference type="Proteomes" id="UP000006838">
    <property type="component" value="Chromosome"/>
</dbReference>
<dbReference type="GO" id="GO:0005829">
    <property type="term" value="C:cytosol"/>
    <property type="evidence" value="ECO:0007669"/>
    <property type="project" value="TreeGrafter"/>
</dbReference>
<dbReference type="GO" id="GO:0005960">
    <property type="term" value="C:glycine cleavage complex"/>
    <property type="evidence" value="ECO:0007669"/>
    <property type="project" value="TreeGrafter"/>
</dbReference>
<dbReference type="GO" id="GO:0016594">
    <property type="term" value="F:glycine binding"/>
    <property type="evidence" value="ECO:0007669"/>
    <property type="project" value="TreeGrafter"/>
</dbReference>
<dbReference type="GO" id="GO:0004375">
    <property type="term" value="F:glycine dehydrogenase (decarboxylating) activity"/>
    <property type="evidence" value="ECO:0007669"/>
    <property type="project" value="UniProtKB-EC"/>
</dbReference>
<dbReference type="GO" id="GO:0030170">
    <property type="term" value="F:pyridoxal phosphate binding"/>
    <property type="evidence" value="ECO:0007669"/>
    <property type="project" value="TreeGrafter"/>
</dbReference>
<dbReference type="GO" id="GO:0019464">
    <property type="term" value="P:glycine decarboxylation via glycine cleavage system"/>
    <property type="evidence" value="ECO:0007669"/>
    <property type="project" value="UniProtKB-UniRule"/>
</dbReference>
<dbReference type="FunFam" id="3.40.640.10:FF:000224">
    <property type="entry name" value="Probable glycine dehydrogenase (decarboxylating) subunit 2"/>
    <property type="match status" value="1"/>
</dbReference>
<dbReference type="FunFam" id="3.90.1150.10:FF:000014">
    <property type="entry name" value="Probable glycine dehydrogenase (decarboxylating) subunit 2"/>
    <property type="match status" value="1"/>
</dbReference>
<dbReference type="Gene3D" id="6.20.440.10">
    <property type="match status" value="1"/>
</dbReference>
<dbReference type="Gene3D" id="3.90.1150.10">
    <property type="entry name" value="Aspartate Aminotransferase, domain 1"/>
    <property type="match status" value="1"/>
</dbReference>
<dbReference type="Gene3D" id="3.40.640.10">
    <property type="entry name" value="Type I PLP-dependent aspartate aminotransferase-like (Major domain)"/>
    <property type="match status" value="1"/>
</dbReference>
<dbReference type="HAMAP" id="MF_00713">
    <property type="entry name" value="GcvPB"/>
    <property type="match status" value="1"/>
</dbReference>
<dbReference type="InterPro" id="IPR023012">
    <property type="entry name" value="GcvPB"/>
</dbReference>
<dbReference type="InterPro" id="IPR049316">
    <property type="entry name" value="GDC-P_C"/>
</dbReference>
<dbReference type="InterPro" id="IPR049315">
    <property type="entry name" value="GDC-P_N"/>
</dbReference>
<dbReference type="InterPro" id="IPR020581">
    <property type="entry name" value="GDC_P"/>
</dbReference>
<dbReference type="InterPro" id="IPR015424">
    <property type="entry name" value="PyrdxlP-dep_Trfase"/>
</dbReference>
<dbReference type="InterPro" id="IPR015421">
    <property type="entry name" value="PyrdxlP-dep_Trfase_major"/>
</dbReference>
<dbReference type="InterPro" id="IPR015422">
    <property type="entry name" value="PyrdxlP-dep_Trfase_small"/>
</dbReference>
<dbReference type="NCBIfam" id="NF003346">
    <property type="entry name" value="PRK04366.1"/>
    <property type="match status" value="1"/>
</dbReference>
<dbReference type="PANTHER" id="PTHR11773:SF1">
    <property type="entry name" value="GLYCINE DEHYDROGENASE (DECARBOXYLATING), MITOCHONDRIAL"/>
    <property type="match status" value="1"/>
</dbReference>
<dbReference type="PANTHER" id="PTHR11773">
    <property type="entry name" value="GLYCINE DEHYDROGENASE, DECARBOXYLATING"/>
    <property type="match status" value="1"/>
</dbReference>
<dbReference type="Pfam" id="PF21478">
    <property type="entry name" value="GcvP2_C"/>
    <property type="match status" value="1"/>
</dbReference>
<dbReference type="Pfam" id="PF02347">
    <property type="entry name" value="GDC-P"/>
    <property type="match status" value="1"/>
</dbReference>
<dbReference type="SUPFAM" id="SSF53383">
    <property type="entry name" value="PLP-dependent transferases"/>
    <property type="match status" value="1"/>
</dbReference>
<protein>
    <recommendedName>
        <fullName evidence="1">Probable glycine dehydrogenase (decarboxylating) subunit 2</fullName>
        <ecNumber evidence="1">1.4.4.2</ecNumber>
    </recommendedName>
    <alternativeName>
        <fullName evidence="1">Glycine cleavage system P-protein subunit 2</fullName>
    </alternativeName>
    <alternativeName>
        <fullName evidence="1">Glycine decarboxylase subunit 2</fullName>
    </alternativeName>
    <alternativeName>
        <fullName evidence="1">Glycine dehydrogenase (aminomethyl-transferring) subunit 2</fullName>
    </alternativeName>
</protein>
<keyword id="KW-0560">Oxidoreductase</keyword>
<keyword id="KW-0663">Pyridoxal phosphate</keyword>
<keyword id="KW-1185">Reference proteome</keyword>
<feature type="chain" id="PRO_1000045701" description="Probable glycine dehydrogenase (decarboxylating) subunit 2">
    <location>
        <begin position="1"/>
        <end position="486"/>
    </location>
</feature>
<feature type="region of interest" description="Disordered" evidence="2">
    <location>
        <begin position="1"/>
        <end position="26"/>
    </location>
</feature>
<feature type="modified residue" description="N6-(pyridoxal phosphate)lysine" evidence="1">
    <location>
        <position position="264"/>
    </location>
</feature>
<sequence length="486" mass="52987">MLIFESSRPGRQARAQAPKPTAATNDLPERFLRQQPPALPEVSEMDVVRHYTGLSQKNFSIDTHFYPLGSCTMKYNPRACHTLASLPGFLERHPATPEAMSQGFLACLYELQDILAKMTGMQTMSLAPMAGAQGEFTGVAMIRAYHEARGDKERCEMLVPDAAHGTNPATATMCGFRVREIPTNPEGDVDLEALHKALGPQTAGIMLTNPSTLGIFDRNIQVIAQSVHKAGGLLYYDGANLNAILGKVKPGDMGFDVIHLNLHKTFSTPHGGGGPGSGPVGVGEKLLPFLPVPRVARAEGGSYRWLTAEDCPQTIGPLSAWMGNAGVLLRAYIYVRLLGLEGMKRVADFSALNANYLAQRMAEAGFDLAYPMRRAGHEFVVTLKRQAKELGVTATDFAKRLLDLGFHAPTIYFPLLVPECLLIEPAETESKQTLDAFVAAMEQIAKEAQENPELLKQAPHTLPARRLDEVKAAKELDLAWKPTPHE</sequence>
<name>GCSPB_NITOC</name>
<gene>
    <name evidence="1" type="primary">gcvPB</name>
    <name type="ordered locus">Noc_2547</name>
</gene>
<accession>Q3J846</accession>
<organism>
    <name type="scientific">Nitrosococcus oceani (strain ATCC 19707 / BCRC 17464 / JCM 30415 / NCIMB 11848 / C-107)</name>
    <dbReference type="NCBI Taxonomy" id="323261"/>
    <lineage>
        <taxon>Bacteria</taxon>
        <taxon>Pseudomonadati</taxon>
        <taxon>Pseudomonadota</taxon>
        <taxon>Gammaproteobacteria</taxon>
        <taxon>Chromatiales</taxon>
        <taxon>Chromatiaceae</taxon>
        <taxon>Nitrosococcus</taxon>
    </lineage>
</organism>
<comment type="function">
    <text evidence="1">The glycine cleavage system catalyzes the degradation of glycine. The P protein binds the alpha-amino group of glycine through its pyridoxal phosphate cofactor; CO(2) is released and the remaining methylamine moiety is then transferred to the lipoamide cofactor of the H protein.</text>
</comment>
<comment type="catalytic activity">
    <reaction evidence="1">
        <text>N(6)-[(R)-lipoyl]-L-lysyl-[glycine-cleavage complex H protein] + glycine + H(+) = N(6)-[(R)-S(8)-aminomethyldihydrolipoyl]-L-lysyl-[glycine-cleavage complex H protein] + CO2</text>
        <dbReference type="Rhea" id="RHEA:24304"/>
        <dbReference type="Rhea" id="RHEA-COMP:10494"/>
        <dbReference type="Rhea" id="RHEA-COMP:10495"/>
        <dbReference type="ChEBI" id="CHEBI:15378"/>
        <dbReference type="ChEBI" id="CHEBI:16526"/>
        <dbReference type="ChEBI" id="CHEBI:57305"/>
        <dbReference type="ChEBI" id="CHEBI:83099"/>
        <dbReference type="ChEBI" id="CHEBI:83143"/>
        <dbReference type="EC" id="1.4.4.2"/>
    </reaction>
</comment>
<comment type="cofactor">
    <cofactor evidence="1">
        <name>pyridoxal 5'-phosphate</name>
        <dbReference type="ChEBI" id="CHEBI:597326"/>
    </cofactor>
</comment>
<comment type="subunit">
    <text evidence="1">The glycine cleavage system is composed of four proteins: P, T, L and H. In this organism, the P 'protein' is a heterodimer of two subunits.</text>
</comment>
<comment type="similarity">
    <text evidence="1">Belongs to the GcvP family. C-terminal subunit subfamily.</text>
</comment>
<reference key="1">
    <citation type="journal article" date="2006" name="Appl. Environ. Microbiol.">
        <title>Complete genome sequence of the marine, chemolithoautotrophic, ammonia-oxidizing bacterium Nitrosococcus oceani ATCC 19707.</title>
        <authorList>
            <person name="Klotz M.G."/>
            <person name="Arp D.J."/>
            <person name="Chain P.S.G."/>
            <person name="El-Sheikh A.F."/>
            <person name="Hauser L.J."/>
            <person name="Hommes N.G."/>
            <person name="Larimer F.W."/>
            <person name="Malfatti S.A."/>
            <person name="Norton J.M."/>
            <person name="Poret-Peterson A.T."/>
            <person name="Vergez L.M."/>
            <person name="Ward B.B."/>
        </authorList>
    </citation>
    <scope>NUCLEOTIDE SEQUENCE [LARGE SCALE GENOMIC DNA]</scope>
    <source>
        <strain>ATCC 19707 / BCRC 17464 / JCM 30415 / NCIMB 11848 / C-107</strain>
    </source>
</reference>
<evidence type="ECO:0000255" key="1">
    <source>
        <dbReference type="HAMAP-Rule" id="MF_00713"/>
    </source>
</evidence>
<evidence type="ECO:0000256" key="2">
    <source>
        <dbReference type="SAM" id="MobiDB-lite"/>
    </source>
</evidence>